<feature type="chain" id="PRO_0000109972" description="UPF0342 protein YheA">
    <location>
        <begin position="1"/>
        <end position="117"/>
    </location>
</feature>
<feature type="helix" evidence="2">
    <location>
        <begin position="5"/>
        <end position="17"/>
    </location>
</feature>
<feature type="helix" evidence="2">
    <location>
        <begin position="20"/>
        <end position="34"/>
    </location>
</feature>
<feature type="helix" evidence="2">
    <location>
        <begin position="36"/>
        <end position="48"/>
    </location>
</feature>
<feature type="helix" evidence="2">
    <location>
        <begin position="70"/>
        <end position="78"/>
    </location>
</feature>
<feature type="helix" evidence="2">
    <location>
        <begin position="81"/>
        <end position="104"/>
    </location>
</feature>
<feature type="helix" evidence="2">
    <location>
        <begin position="106"/>
        <end position="111"/>
    </location>
</feature>
<sequence>MAVNFYDVAYDLENALRGSEEFTRLKNLYDEVNADESAKRMFENFRDVQLRLQQKQMAGEEITQEEVTQAQKTVALVQQHEKISQLMEAEQRMSMLIGELNKIIMKPLEELYGSVEG</sequence>
<organism>
    <name type="scientific">Bacillus subtilis (strain 168)</name>
    <dbReference type="NCBI Taxonomy" id="224308"/>
    <lineage>
        <taxon>Bacteria</taxon>
        <taxon>Bacillati</taxon>
        <taxon>Bacillota</taxon>
        <taxon>Bacilli</taxon>
        <taxon>Bacillales</taxon>
        <taxon>Bacillaceae</taxon>
        <taxon>Bacillus</taxon>
    </lineage>
</organism>
<gene>
    <name type="primary">yheA</name>
    <name type="ordered locus">BSU09800</name>
</gene>
<name>YHEA_BACSU</name>
<keyword id="KW-0002">3D-structure</keyword>
<keyword id="KW-1185">Reference proteome</keyword>
<dbReference type="EMBL" id="Y14080">
    <property type="protein sequence ID" value="CAA74444.1"/>
    <property type="molecule type" value="Genomic_DNA"/>
</dbReference>
<dbReference type="EMBL" id="AL009126">
    <property type="protein sequence ID" value="CAB12819.1"/>
    <property type="molecule type" value="Genomic_DNA"/>
</dbReference>
<dbReference type="PIR" id="A69828">
    <property type="entry name" value="A69828"/>
</dbReference>
<dbReference type="RefSeq" id="NP_388861.1">
    <property type="nucleotide sequence ID" value="NC_000964.3"/>
</dbReference>
<dbReference type="RefSeq" id="WP_003224239.1">
    <property type="nucleotide sequence ID" value="NZ_OZ025638.1"/>
</dbReference>
<dbReference type="PDB" id="2OEE">
    <property type="method" value="X-ray"/>
    <property type="resolution" value="1.96 A"/>
    <property type="chains" value="A/B=1-117"/>
</dbReference>
<dbReference type="PDBsum" id="2OEE"/>
<dbReference type="SMR" id="O07542"/>
<dbReference type="FunCoup" id="O07542">
    <property type="interactions" value="15"/>
</dbReference>
<dbReference type="STRING" id="224308.BSU09800"/>
<dbReference type="jPOST" id="O07542"/>
<dbReference type="PaxDb" id="224308-BSU09800"/>
<dbReference type="DNASU" id="936288"/>
<dbReference type="EnsemblBacteria" id="CAB12819">
    <property type="protein sequence ID" value="CAB12819"/>
    <property type="gene ID" value="BSU_09800"/>
</dbReference>
<dbReference type="GeneID" id="936288"/>
<dbReference type="KEGG" id="bsu:BSU09800"/>
<dbReference type="PATRIC" id="fig|224308.179.peg.1053"/>
<dbReference type="eggNOG" id="COG3679">
    <property type="taxonomic scope" value="Bacteria"/>
</dbReference>
<dbReference type="InParanoid" id="O07542"/>
<dbReference type="OrthoDB" id="9811402at2"/>
<dbReference type="PhylomeDB" id="O07542"/>
<dbReference type="BioCyc" id="BSUB:BSU09800-MONOMER"/>
<dbReference type="EvolutionaryTrace" id="O07542"/>
<dbReference type="Proteomes" id="UP000001570">
    <property type="component" value="Chromosome"/>
</dbReference>
<dbReference type="Gene3D" id="1.20.1500.10">
    <property type="entry name" value="YheA/YmcA-like"/>
    <property type="match status" value="1"/>
</dbReference>
<dbReference type="HAMAP" id="MF_01526">
    <property type="entry name" value="UPF0342"/>
    <property type="match status" value="1"/>
</dbReference>
<dbReference type="InterPro" id="IPR010368">
    <property type="entry name" value="Com_YlbF"/>
</dbReference>
<dbReference type="InterPro" id="IPR023378">
    <property type="entry name" value="YheA/YmcA-like_dom_sf"/>
</dbReference>
<dbReference type="Pfam" id="PF06133">
    <property type="entry name" value="Com_YlbF"/>
    <property type="match status" value="1"/>
</dbReference>
<dbReference type="SUPFAM" id="SSF158622">
    <property type="entry name" value="YheA/YmcA-like"/>
    <property type="match status" value="1"/>
</dbReference>
<proteinExistence type="evidence at protein level"/>
<accession>O07542</accession>
<accession>Q796W0</accession>
<protein>
    <recommendedName>
        <fullName>UPF0342 protein YheA</fullName>
    </recommendedName>
</protein>
<reference key="1">
    <citation type="journal article" date="1998" name="Microbiology">
        <title>The 172 kb prkA-addAB region from 83 degrees to 97 degrees of the Bacillus subtilis chromosome contains several dysfunctional genes, the glyB marker, many genes encoding transporter proteins, and the ubiquitous hit gene.</title>
        <authorList>
            <person name="Noback M.A."/>
            <person name="Holsappel S."/>
            <person name="Kiewiet R."/>
            <person name="Terpstra P."/>
            <person name="Wambutt R."/>
            <person name="Wedler H."/>
            <person name="Venema G."/>
            <person name="Bron S."/>
        </authorList>
    </citation>
    <scope>NUCLEOTIDE SEQUENCE [GENOMIC DNA]</scope>
    <source>
        <strain>168</strain>
    </source>
</reference>
<reference key="2">
    <citation type="journal article" date="1997" name="Nature">
        <title>The complete genome sequence of the Gram-positive bacterium Bacillus subtilis.</title>
        <authorList>
            <person name="Kunst F."/>
            <person name="Ogasawara N."/>
            <person name="Moszer I."/>
            <person name="Albertini A.M."/>
            <person name="Alloni G."/>
            <person name="Azevedo V."/>
            <person name="Bertero M.G."/>
            <person name="Bessieres P."/>
            <person name="Bolotin A."/>
            <person name="Borchert S."/>
            <person name="Borriss R."/>
            <person name="Boursier L."/>
            <person name="Brans A."/>
            <person name="Braun M."/>
            <person name="Brignell S.C."/>
            <person name="Bron S."/>
            <person name="Brouillet S."/>
            <person name="Bruschi C.V."/>
            <person name="Caldwell B."/>
            <person name="Capuano V."/>
            <person name="Carter N.M."/>
            <person name="Choi S.-K."/>
            <person name="Codani J.-J."/>
            <person name="Connerton I.F."/>
            <person name="Cummings N.J."/>
            <person name="Daniel R.A."/>
            <person name="Denizot F."/>
            <person name="Devine K.M."/>
            <person name="Duesterhoeft A."/>
            <person name="Ehrlich S.D."/>
            <person name="Emmerson P.T."/>
            <person name="Entian K.-D."/>
            <person name="Errington J."/>
            <person name="Fabret C."/>
            <person name="Ferrari E."/>
            <person name="Foulger D."/>
            <person name="Fritz C."/>
            <person name="Fujita M."/>
            <person name="Fujita Y."/>
            <person name="Fuma S."/>
            <person name="Galizzi A."/>
            <person name="Galleron N."/>
            <person name="Ghim S.-Y."/>
            <person name="Glaser P."/>
            <person name="Goffeau A."/>
            <person name="Golightly E.J."/>
            <person name="Grandi G."/>
            <person name="Guiseppi G."/>
            <person name="Guy B.J."/>
            <person name="Haga K."/>
            <person name="Haiech J."/>
            <person name="Harwood C.R."/>
            <person name="Henaut A."/>
            <person name="Hilbert H."/>
            <person name="Holsappel S."/>
            <person name="Hosono S."/>
            <person name="Hullo M.-F."/>
            <person name="Itaya M."/>
            <person name="Jones L.-M."/>
            <person name="Joris B."/>
            <person name="Karamata D."/>
            <person name="Kasahara Y."/>
            <person name="Klaerr-Blanchard M."/>
            <person name="Klein C."/>
            <person name="Kobayashi Y."/>
            <person name="Koetter P."/>
            <person name="Koningstein G."/>
            <person name="Krogh S."/>
            <person name="Kumano M."/>
            <person name="Kurita K."/>
            <person name="Lapidus A."/>
            <person name="Lardinois S."/>
            <person name="Lauber J."/>
            <person name="Lazarevic V."/>
            <person name="Lee S.-M."/>
            <person name="Levine A."/>
            <person name="Liu H."/>
            <person name="Masuda S."/>
            <person name="Mauel C."/>
            <person name="Medigue C."/>
            <person name="Medina N."/>
            <person name="Mellado R.P."/>
            <person name="Mizuno M."/>
            <person name="Moestl D."/>
            <person name="Nakai S."/>
            <person name="Noback M."/>
            <person name="Noone D."/>
            <person name="O'Reilly M."/>
            <person name="Ogawa K."/>
            <person name="Ogiwara A."/>
            <person name="Oudega B."/>
            <person name="Park S.-H."/>
            <person name="Parro V."/>
            <person name="Pohl T.M."/>
            <person name="Portetelle D."/>
            <person name="Porwollik S."/>
            <person name="Prescott A.M."/>
            <person name="Presecan E."/>
            <person name="Pujic P."/>
            <person name="Purnelle B."/>
            <person name="Rapoport G."/>
            <person name="Rey M."/>
            <person name="Reynolds S."/>
            <person name="Rieger M."/>
            <person name="Rivolta C."/>
            <person name="Rocha E."/>
            <person name="Roche B."/>
            <person name="Rose M."/>
            <person name="Sadaie Y."/>
            <person name="Sato T."/>
            <person name="Scanlan E."/>
            <person name="Schleich S."/>
            <person name="Schroeter R."/>
            <person name="Scoffone F."/>
            <person name="Sekiguchi J."/>
            <person name="Sekowska A."/>
            <person name="Seror S.J."/>
            <person name="Serror P."/>
            <person name="Shin B.-S."/>
            <person name="Soldo B."/>
            <person name="Sorokin A."/>
            <person name="Tacconi E."/>
            <person name="Takagi T."/>
            <person name="Takahashi H."/>
            <person name="Takemaru K."/>
            <person name="Takeuchi M."/>
            <person name="Tamakoshi A."/>
            <person name="Tanaka T."/>
            <person name="Terpstra P."/>
            <person name="Tognoni A."/>
            <person name="Tosato V."/>
            <person name="Uchiyama S."/>
            <person name="Vandenbol M."/>
            <person name="Vannier F."/>
            <person name="Vassarotti A."/>
            <person name="Viari A."/>
            <person name="Wambutt R."/>
            <person name="Wedler E."/>
            <person name="Wedler H."/>
            <person name="Weitzenegger T."/>
            <person name="Winters P."/>
            <person name="Wipat A."/>
            <person name="Yamamoto H."/>
            <person name="Yamane K."/>
            <person name="Yasumoto K."/>
            <person name="Yata K."/>
            <person name="Yoshida K."/>
            <person name="Yoshikawa H.-F."/>
            <person name="Zumstein E."/>
            <person name="Yoshikawa H."/>
            <person name="Danchin A."/>
        </authorList>
    </citation>
    <scope>NUCLEOTIDE SEQUENCE [LARGE SCALE GENOMIC DNA]</scope>
    <source>
        <strain>168</strain>
    </source>
</reference>
<comment type="similarity">
    <text evidence="1">Belongs to the UPF0342 family.</text>
</comment>
<evidence type="ECO:0000305" key="1"/>
<evidence type="ECO:0007829" key="2">
    <source>
        <dbReference type="PDB" id="2OEE"/>
    </source>
</evidence>